<comment type="subcellular location">
    <subcellularLocation>
        <location>Cell inner membrane</location>
        <topology>Multi-pass membrane protein</topology>
    </subcellularLocation>
</comment>
<keyword id="KW-0997">Cell inner membrane</keyword>
<keyword id="KW-1003">Cell membrane</keyword>
<keyword id="KW-0472">Membrane</keyword>
<keyword id="KW-1185">Reference proteome</keyword>
<keyword id="KW-0812">Transmembrane</keyword>
<keyword id="KW-1133">Transmembrane helix</keyword>
<organism>
    <name type="scientific">Escherichia coli (strain K12)</name>
    <dbReference type="NCBI Taxonomy" id="83333"/>
    <lineage>
        <taxon>Bacteria</taxon>
        <taxon>Pseudomonadati</taxon>
        <taxon>Pseudomonadota</taxon>
        <taxon>Gammaproteobacteria</taxon>
        <taxon>Enterobacterales</taxon>
        <taxon>Enterobacteriaceae</taxon>
        <taxon>Escherichia</taxon>
    </lineage>
</organism>
<dbReference type="EMBL" id="U00096">
    <property type="protein sequence ID" value="AAC74047.1"/>
    <property type="molecule type" value="Genomic_DNA"/>
</dbReference>
<dbReference type="EMBL" id="AP009048">
    <property type="protein sequence ID" value="BAA35719.1"/>
    <property type="molecule type" value="Genomic_DNA"/>
</dbReference>
<dbReference type="EMBL" id="J04726">
    <property type="status" value="NOT_ANNOTATED_CDS"/>
    <property type="molecule type" value="Genomic_DNA"/>
</dbReference>
<dbReference type="PIR" id="H64836">
    <property type="entry name" value="H64836"/>
</dbReference>
<dbReference type="RefSeq" id="NP_415481.1">
    <property type="nucleotide sequence ID" value="NC_000913.3"/>
</dbReference>
<dbReference type="RefSeq" id="WP_001261235.1">
    <property type="nucleotide sequence ID" value="NZ_STEB01000006.1"/>
</dbReference>
<dbReference type="BioGRID" id="4262836">
    <property type="interactions" value="27"/>
</dbReference>
<dbReference type="FunCoup" id="P0AB12">
    <property type="interactions" value="23"/>
</dbReference>
<dbReference type="STRING" id="511145.b0961"/>
<dbReference type="TCDB" id="9.B.55.1.1">
    <property type="family name" value="the 4 tms duf307/yccf (duf307) family"/>
</dbReference>
<dbReference type="jPOST" id="P0AB12"/>
<dbReference type="PaxDb" id="511145-b0961"/>
<dbReference type="EnsemblBacteria" id="AAC74047">
    <property type="protein sequence ID" value="AAC74047"/>
    <property type="gene ID" value="b0961"/>
</dbReference>
<dbReference type="GeneID" id="945594"/>
<dbReference type="KEGG" id="ecj:JW0944"/>
<dbReference type="KEGG" id="eco:b0961"/>
<dbReference type="KEGG" id="ecoc:C3026_05875"/>
<dbReference type="PATRIC" id="fig|1411691.4.peg.1313"/>
<dbReference type="EchoBASE" id="EB2212"/>
<dbReference type="eggNOG" id="COG3304">
    <property type="taxonomic scope" value="Bacteria"/>
</dbReference>
<dbReference type="HOGENOM" id="CLU_120384_0_0_6"/>
<dbReference type="InParanoid" id="P0AB12"/>
<dbReference type="OMA" id="GVYALWP"/>
<dbReference type="OrthoDB" id="3238663at2"/>
<dbReference type="PhylomeDB" id="P0AB12"/>
<dbReference type="BioCyc" id="EcoCyc:G6496-MONOMER"/>
<dbReference type="PRO" id="PR:P0AB12"/>
<dbReference type="Proteomes" id="UP000000625">
    <property type="component" value="Chromosome"/>
</dbReference>
<dbReference type="GO" id="GO:0005886">
    <property type="term" value="C:plasma membrane"/>
    <property type="evidence" value="ECO:0000314"/>
    <property type="project" value="EcoCyc"/>
</dbReference>
<dbReference type="InterPro" id="IPR052937">
    <property type="entry name" value="Inner_membrane_protein"/>
</dbReference>
<dbReference type="InterPro" id="IPR031308">
    <property type="entry name" value="UCP028777"/>
</dbReference>
<dbReference type="InterPro" id="IPR005185">
    <property type="entry name" value="YccF"/>
</dbReference>
<dbReference type="NCBIfam" id="NF008739">
    <property type="entry name" value="PRK11770.1-1"/>
    <property type="match status" value="1"/>
</dbReference>
<dbReference type="PANTHER" id="PTHR42903">
    <property type="entry name" value="INNER MEMBRANE PROTEIN YCCF"/>
    <property type="match status" value="1"/>
</dbReference>
<dbReference type="PANTHER" id="PTHR42903:SF1">
    <property type="entry name" value="INNER MEMBRANE PROTEIN YCCF"/>
    <property type="match status" value="1"/>
</dbReference>
<dbReference type="Pfam" id="PF03733">
    <property type="entry name" value="YccF"/>
    <property type="match status" value="2"/>
</dbReference>
<dbReference type="PIRSF" id="PIRSF028777">
    <property type="entry name" value="UCP028777"/>
    <property type="match status" value="1"/>
</dbReference>
<sequence>MRTVLNILNFVLGGFATTLGWLLATLVSIVLIFTLPLTRSCWEITKLSLVPYGNEAIHVDELNPAGKNVLLNTGGTVLNIFWLIFFGWWLCLMHIATGIAQCISIIGIPVGIANFKIAAIALWPVGRRVVSVETAQAAREANARRRFE</sequence>
<reference key="1">
    <citation type="journal article" date="1996" name="DNA Res.">
        <title>A 718-kb DNA sequence of the Escherichia coli K-12 genome corresponding to the 12.7-28.0 min region on the linkage map.</title>
        <authorList>
            <person name="Oshima T."/>
            <person name="Aiba H."/>
            <person name="Baba T."/>
            <person name="Fujita K."/>
            <person name="Hayashi K."/>
            <person name="Honjo A."/>
            <person name="Ikemoto K."/>
            <person name="Inada T."/>
            <person name="Itoh T."/>
            <person name="Kajihara M."/>
            <person name="Kanai K."/>
            <person name="Kashimoto K."/>
            <person name="Kimura S."/>
            <person name="Kitagawa M."/>
            <person name="Makino K."/>
            <person name="Masuda S."/>
            <person name="Miki T."/>
            <person name="Mizobuchi K."/>
            <person name="Mori H."/>
            <person name="Motomura K."/>
            <person name="Nakamura Y."/>
            <person name="Nashimoto H."/>
            <person name="Nishio Y."/>
            <person name="Saito N."/>
            <person name="Sampei G."/>
            <person name="Seki Y."/>
            <person name="Tagami H."/>
            <person name="Takemoto K."/>
            <person name="Wada C."/>
            <person name="Yamamoto Y."/>
            <person name="Yano M."/>
            <person name="Horiuchi T."/>
        </authorList>
    </citation>
    <scope>NUCLEOTIDE SEQUENCE [LARGE SCALE GENOMIC DNA]</scope>
    <source>
        <strain>K12 / W3110 / ATCC 27325 / DSM 5911</strain>
    </source>
</reference>
<reference key="2">
    <citation type="journal article" date="1997" name="Science">
        <title>The complete genome sequence of Escherichia coli K-12.</title>
        <authorList>
            <person name="Blattner F.R."/>
            <person name="Plunkett G. III"/>
            <person name="Bloch C.A."/>
            <person name="Perna N.T."/>
            <person name="Burland V."/>
            <person name="Riley M."/>
            <person name="Collado-Vides J."/>
            <person name="Glasner J.D."/>
            <person name="Rode C.K."/>
            <person name="Mayhew G.F."/>
            <person name="Gregor J."/>
            <person name="Davis N.W."/>
            <person name="Kirkpatrick H.A."/>
            <person name="Goeden M.A."/>
            <person name="Rose D.J."/>
            <person name="Mau B."/>
            <person name="Shao Y."/>
        </authorList>
    </citation>
    <scope>NUCLEOTIDE SEQUENCE [LARGE SCALE GENOMIC DNA]</scope>
    <source>
        <strain>K12 / MG1655 / ATCC 47076</strain>
    </source>
</reference>
<reference key="3">
    <citation type="journal article" date="2006" name="Mol. Syst. Biol.">
        <title>Highly accurate genome sequences of Escherichia coli K-12 strains MG1655 and W3110.</title>
        <authorList>
            <person name="Hayashi K."/>
            <person name="Morooka N."/>
            <person name="Yamamoto Y."/>
            <person name="Fujita K."/>
            <person name="Isono K."/>
            <person name="Choi S."/>
            <person name="Ohtsubo E."/>
            <person name="Baba T."/>
            <person name="Wanner B.L."/>
            <person name="Mori H."/>
            <person name="Horiuchi T."/>
        </authorList>
    </citation>
    <scope>NUCLEOTIDE SEQUENCE [LARGE SCALE GENOMIC DNA]</scope>
    <source>
        <strain>K12 / W3110 / ATCC 27325 / DSM 5911</strain>
    </source>
</reference>
<reference key="4">
    <citation type="journal article" date="1989" name="J. Biol. Chem.">
        <title>The molecular cloning of the gene encoding the Escherichia coli 75-kDa helicase and the determination of its nucleotide sequence and gentic map position.</title>
        <authorList>
            <person name="Wood E.R."/>
            <person name="Matson S.W."/>
        </authorList>
    </citation>
    <scope>NUCLEOTIDE SEQUENCE [GENOMIC DNA] OF 1-35</scope>
</reference>
<reference key="5">
    <citation type="journal article" date="1994" name="Nucleic Acids Res.">
        <title>Intrinsic and extrinsic approaches for detecting genes in a bacterial genome.</title>
        <authorList>
            <person name="Borodovsky M."/>
            <person name="Rudd K.E."/>
            <person name="Koonin E.V."/>
        </authorList>
    </citation>
    <scope>IDENTIFICATION</scope>
</reference>
<reference key="6">
    <citation type="journal article" date="2005" name="Science">
        <title>Global topology analysis of the Escherichia coli inner membrane proteome.</title>
        <authorList>
            <person name="Daley D.O."/>
            <person name="Rapp M."/>
            <person name="Granseth E."/>
            <person name="Melen K."/>
            <person name="Drew D."/>
            <person name="von Heijne G."/>
        </authorList>
    </citation>
    <scope>TOPOLOGY [LARGE SCALE ANALYSIS]</scope>
    <source>
        <strain>K12 / MG1655 / ATCC 47076</strain>
    </source>
</reference>
<gene>
    <name type="primary">yccF</name>
    <name type="ordered locus">b0961</name>
    <name type="ordered locus">JW0944</name>
</gene>
<evidence type="ECO:0000255" key="1"/>
<protein>
    <recommendedName>
        <fullName>Inner membrane protein YccF</fullName>
    </recommendedName>
</protein>
<accession>P0AB12</accession>
<accession>P37065</accession>
<accession>P75871</accession>
<feature type="chain" id="PRO_0000168783" description="Inner membrane protein YccF">
    <location>
        <begin position="1"/>
        <end position="148"/>
    </location>
</feature>
<feature type="topological domain" description="Periplasmic" evidence="1">
    <location>
        <begin position="1"/>
        <end position="14"/>
    </location>
</feature>
<feature type="transmembrane region" description="Helical" evidence="1">
    <location>
        <begin position="15"/>
        <end position="37"/>
    </location>
</feature>
<feature type="topological domain" description="Cytoplasmic" evidence="1">
    <location>
        <begin position="38"/>
        <end position="76"/>
    </location>
</feature>
<feature type="transmembrane region" description="Helical" evidence="1">
    <location>
        <begin position="77"/>
        <end position="99"/>
    </location>
</feature>
<feature type="topological domain" description="Periplasmic" evidence="1">
    <location>
        <begin position="100"/>
        <end position="102"/>
    </location>
</feature>
<feature type="transmembrane region" description="Helical" evidence="1">
    <location>
        <begin position="103"/>
        <end position="125"/>
    </location>
</feature>
<feature type="topological domain" description="Cytoplasmic" evidence="1">
    <location>
        <begin position="126"/>
        <end position="148"/>
    </location>
</feature>
<name>YCCF_ECOLI</name>
<proteinExistence type="evidence at protein level"/>